<sequence length="350" mass="39127">MRVYSPGRVNLIGEHTDYSYGYVLPMAIDRYTVIEGEPHERVELYSEHFKKSVSFELEKLEKGNNWADYVKGVYWVLQREGYEVGGMKGRVGGNLPLGSGLSSSASFELAVLAFLNEAYSLKLSRLDMALLAKKAENEFVGVPCGILDQFAIAFGREGKAIFLDTETLDYEYLPFPEDLEVLVFYTGVKRELASSAYAERKKAIEEALRVLGKSSSKYVTEEELSKLPEKERRYLGYVVRENSRVLAFRDALKEGDVEAMGQLMVEAHRDIAENYRVSCEELDFFVEKALELGALGARLTGAGFGGSAIALVEHGKGESLGREVAELYTKVFPWTPEVFVVRPSEGVMVL</sequence>
<organism>
    <name type="scientific">Thermococcus kodakarensis (strain ATCC BAA-918 / JCM 12380 / KOD1)</name>
    <name type="common">Pyrococcus kodakaraensis (strain KOD1)</name>
    <dbReference type="NCBI Taxonomy" id="69014"/>
    <lineage>
        <taxon>Archaea</taxon>
        <taxon>Methanobacteriati</taxon>
        <taxon>Methanobacteriota</taxon>
        <taxon>Thermococci</taxon>
        <taxon>Thermococcales</taxon>
        <taxon>Thermococcaceae</taxon>
        <taxon>Thermococcus</taxon>
    </lineage>
</organism>
<dbReference type="EC" id="2.7.1.6" evidence="1"/>
<dbReference type="EMBL" id="AP006878">
    <property type="protein sequence ID" value="BAD86020.1"/>
    <property type="molecule type" value="Genomic_DNA"/>
</dbReference>
<dbReference type="SMR" id="Q5JEK8"/>
<dbReference type="STRING" id="69014.TK1831"/>
<dbReference type="EnsemblBacteria" id="BAD86020">
    <property type="protein sequence ID" value="BAD86020"/>
    <property type="gene ID" value="TK1831"/>
</dbReference>
<dbReference type="KEGG" id="tko:TK1831"/>
<dbReference type="PATRIC" id="fig|69014.16.peg.1788"/>
<dbReference type="eggNOG" id="arCOG01029">
    <property type="taxonomic scope" value="Archaea"/>
</dbReference>
<dbReference type="HOGENOM" id="CLU_017814_2_1_2"/>
<dbReference type="InParanoid" id="Q5JEK8"/>
<dbReference type="PhylomeDB" id="Q5JEK8"/>
<dbReference type="UniPathway" id="UPA00214"/>
<dbReference type="Proteomes" id="UP000000536">
    <property type="component" value="Chromosome"/>
</dbReference>
<dbReference type="GO" id="GO:0005829">
    <property type="term" value="C:cytosol"/>
    <property type="evidence" value="ECO:0000318"/>
    <property type="project" value="GO_Central"/>
</dbReference>
<dbReference type="GO" id="GO:0005524">
    <property type="term" value="F:ATP binding"/>
    <property type="evidence" value="ECO:0007669"/>
    <property type="project" value="UniProtKB-UniRule"/>
</dbReference>
<dbReference type="GO" id="GO:0004335">
    <property type="term" value="F:galactokinase activity"/>
    <property type="evidence" value="ECO:0000318"/>
    <property type="project" value="GO_Central"/>
</dbReference>
<dbReference type="GO" id="GO:0000287">
    <property type="term" value="F:magnesium ion binding"/>
    <property type="evidence" value="ECO:0007669"/>
    <property type="project" value="UniProtKB-UniRule"/>
</dbReference>
<dbReference type="GO" id="GO:0006012">
    <property type="term" value="P:galactose metabolic process"/>
    <property type="evidence" value="ECO:0000318"/>
    <property type="project" value="GO_Central"/>
</dbReference>
<dbReference type="FunFam" id="3.30.230.10:FF:000126">
    <property type="entry name" value="Galactokinase"/>
    <property type="match status" value="1"/>
</dbReference>
<dbReference type="FunFam" id="3.30.70.890:FF:000001">
    <property type="entry name" value="Galactokinase"/>
    <property type="match status" value="1"/>
</dbReference>
<dbReference type="Gene3D" id="3.30.230.10">
    <property type="match status" value="1"/>
</dbReference>
<dbReference type="Gene3D" id="3.30.70.890">
    <property type="entry name" value="GHMP kinase, C-terminal domain"/>
    <property type="match status" value="1"/>
</dbReference>
<dbReference type="HAMAP" id="MF_00246">
    <property type="entry name" value="Galactokinase"/>
    <property type="match status" value="1"/>
</dbReference>
<dbReference type="InterPro" id="IPR000705">
    <property type="entry name" value="Galactokinase"/>
</dbReference>
<dbReference type="InterPro" id="IPR022963">
    <property type="entry name" value="Galactokinase_bac"/>
</dbReference>
<dbReference type="InterPro" id="IPR019741">
    <property type="entry name" value="Galactokinase_CS"/>
</dbReference>
<dbReference type="InterPro" id="IPR019539">
    <property type="entry name" value="GalKase_N"/>
</dbReference>
<dbReference type="InterPro" id="IPR013750">
    <property type="entry name" value="GHMP_kinase_C_dom"/>
</dbReference>
<dbReference type="InterPro" id="IPR036554">
    <property type="entry name" value="GHMP_kinase_C_sf"/>
</dbReference>
<dbReference type="InterPro" id="IPR006204">
    <property type="entry name" value="GHMP_kinase_N_dom"/>
</dbReference>
<dbReference type="InterPro" id="IPR006203">
    <property type="entry name" value="GHMP_knse_ATP-bd_CS"/>
</dbReference>
<dbReference type="InterPro" id="IPR006206">
    <property type="entry name" value="Mevalonate/galactokinase"/>
</dbReference>
<dbReference type="InterPro" id="IPR020568">
    <property type="entry name" value="Ribosomal_Su5_D2-typ_SF"/>
</dbReference>
<dbReference type="InterPro" id="IPR014721">
    <property type="entry name" value="Ribsml_uS5_D2-typ_fold_subgr"/>
</dbReference>
<dbReference type="NCBIfam" id="TIGR00131">
    <property type="entry name" value="gal_kin"/>
    <property type="match status" value="1"/>
</dbReference>
<dbReference type="NCBIfam" id="NF003006">
    <property type="entry name" value="PRK03817.1"/>
    <property type="match status" value="1"/>
</dbReference>
<dbReference type="PANTHER" id="PTHR10457:SF7">
    <property type="entry name" value="GALACTOKINASE-RELATED"/>
    <property type="match status" value="1"/>
</dbReference>
<dbReference type="PANTHER" id="PTHR10457">
    <property type="entry name" value="MEVALONATE KINASE/GALACTOKINASE"/>
    <property type="match status" value="1"/>
</dbReference>
<dbReference type="Pfam" id="PF10509">
    <property type="entry name" value="GalKase_gal_bdg"/>
    <property type="match status" value="1"/>
</dbReference>
<dbReference type="Pfam" id="PF08544">
    <property type="entry name" value="GHMP_kinases_C"/>
    <property type="match status" value="1"/>
</dbReference>
<dbReference type="Pfam" id="PF00288">
    <property type="entry name" value="GHMP_kinases_N"/>
    <property type="match status" value="1"/>
</dbReference>
<dbReference type="PIRSF" id="PIRSF000530">
    <property type="entry name" value="Galactokinase"/>
    <property type="match status" value="1"/>
</dbReference>
<dbReference type="PRINTS" id="PR00473">
    <property type="entry name" value="GALCTOKINASE"/>
</dbReference>
<dbReference type="PRINTS" id="PR00959">
    <property type="entry name" value="MEVGALKINASE"/>
</dbReference>
<dbReference type="SUPFAM" id="SSF55060">
    <property type="entry name" value="GHMP Kinase, C-terminal domain"/>
    <property type="match status" value="1"/>
</dbReference>
<dbReference type="SUPFAM" id="SSF54211">
    <property type="entry name" value="Ribosomal protein S5 domain 2-like"/>
    <property type="match status" value="1"/>
</dbReference>
<dbReference type="PROSITE" id="PS00106">
    <property type="entry name" value="GALACTOKINASE"/>
    <property type="match status" value="1"/>
</dbReference>
<dbReference type="PROSITE" id="PS00627">
    <property type="entry name" value="GHMP_KINASES_ATP"/>
    <property type="match status" value="1"/>
</dbReference>
<proteinExistence type="inferred from homology"/>
<reference key="1">
    <citation type="journal article" date="2005" name="Genome Res.">
        <title>Complete genome sequence of the hyperthermophilic archaeon Thermococcus kodakaraensis KOD1 and comparison with Pyrococcus genomes.</title>
        <authorList>
            <person name="Fukui T."/>
            <person name="Atomi H."/>
            <person name="Kanai T."/>
            <person name="Matsumi R."/>
            <person name="Fujiwara S."/>
            <person name="Imanaka T."/>
        </authorList>
    </citation>
    <scope>NUCLEOTIDE SEQUENCE [LARGE SCALE GENOMIC DNA]</scope>
    <source>
        <strain>ATCC BAA-918 / JCM 12380 / KOD1</strain>
    </source>
</reference>
<comment type="function">
    <text evidence="1">Catalyzes the transfer of the gamma-phosphate of ATP to D-galactose to form alpha-D-galactose-1-phosphate (Gal-1-P).</text>
</comment>
<comment type="catalytic activity">
    <reaction evidence="1">
        <text>alpha-D-galactose + ATP = alpha-D-galactose 1-phosphate + ADP + H(+)</text>
        <dbReference type="Rhea" id="RHEA:13553"/>
        <dbReference type="ChEBI" id="CHEBI:15378"/>
        <dbReference type="ChEBI" id="CHEBI:28061"/>
        <dbReference type="ChEBI" id="CHEBI:30616"/>
        <dbReference type="ChEBI" id="CHEBI:58336"/>
        <dbReference type="ChEBI" id="CHEBI:456216"/>
        <dbReference type="EC" id="2.7.1.6"/>
    </reaction>
</comment>
<comment type="pathway">
    <text evidence="1">Carbohydrate metabolism; galactose metabolism.</text>
</comment>
<comment type="subcellular location">
    <subcellularLocation>
        <location evidence="1">Cytoplasm</location>
    </subcellularLocation>
</comment>
<comment type="similarity">
    <text evidence="1">Belongs to the GHMP kinase family. GalK subfamily.</text>
</comment>
<feature type="chain" id="PRO_0000184643" description="Galactokinase">
    <location>
        <begin position="1"/>
        <end position="350"/>
    </location>
</feature>
<feature type="active site" description="Proton acceptor" evidence="1">
    <location>
        <position position="148"/>
    </location>
</feature>
<feature type="binding site" evidence="1">
    <location>
        <begin position="14"/>
        <end position="17"/>
    </location>
    <ligand>
        <name>substrate</name>
    </ligand>
</feature>
<feature type="binding site" evidence="1">
    <location>
        <position position="46"/>
    </location>
    <ligand>
        <name>ATP</name>
        <dbReference type="ChEBI" id="CHEBI:30616"/>
    </ligand>
</feature>
<feature type="binding site" evidence="1">
    <location>
        <begin position="98"/>
        <end position="104"/>
    </location>
    <ligand>
        <name>ATP</name>
        <dbReference type="ChEBI" id="CHEBI:30616"/>
    </ligand>
</feature>
<feature type="binding site" evidence="1">
    <location>
        <position position="104"/>
    </location>
    <ligand>
        <name>Mg(2+)</name>
        <dbReference type="ChEBI" id="CHEBI:18420"/>
    </ligand>
</feature>
<feature type="binding site" evidence="1">
    <location>
        <position position="136"/>
    </location>
    <ligand>
        <name>Mg(2+)</name>
        <dbReference type="ChEBI" id="CHEBI:18420"/>
    </ligand>
</feature>
<feature type="binding site" evidence="1">
    <location>
        <position position="197"/>
    </location>
    <ligand>
        <name>substrate</name>
    </ligand>
</feature>
<feature type="site" description="Transition state stabilizer" evidence="1">
    <location>
        <position position="8"/>
    </location>
</feature>
<gene>
    <name evidence="1" type="primary">galK</name>
    <name type="ordered locus">TK1831</name>
</gene>
<keyword id="KW-0067">ATP-binding</keyword>
<keyword id="KW-0119">Carbohydrate metabolism</keyword>
<keyword id="KW-0963">Cytoplasm</keyword>
<keyword id="KW-0299">Galactose metabolism</keyword>
<keyword id="KW-0418">Kinase</keyword>
<keyword id="KW-0460">Magnesium</keyword>
<keyword id="KW-0479">Metal-binding</keyword>
<keyword id="KW-0547">Nucleotide-binding</keyword>
<keyword id="KW-1185">Reference proteome</keyword>
<keyword id="KW-0808">Transferase</keyword>
<evidence type="ECO:0000255" key="1">
    <source>
        <dbReference type="HAMAP-Rule" id="MF_00246"/>
    </source>
</evidence>
<accession>Q5JEK8</accession>
<protein>
    <recommendedName>
        <fullName evidence="1">Galactokinase</fullName>
        <ecNumber evidence="1">2.7.1.6</ecNumber>
    </recommendedName>
    <alternativeName>
        <fullName evidence="1">Galactose kinase</fullName>
    </alternativeName>
</protein>
<name>GAL1_THEKO</name>